<reference key="1">
    <citation type="journal article" date="2008" name="J. Bacteriol.">
        <title>The complete genome sequence of Actinobacillus pleuropneumoniae L20 (serotype 5b).</title>
        <authorList>
            <person name="Foote S.J."/>
            <person name="Bosse J.T."/>
            <person name="Bouevitch A.B."/>
            <person name="Langford P.R."/>
            <person name="Young N.M."/>
            <person name="Nash J.H.E."/>
        </authorList>
    </citation>
    <scope>NUCLEOTIDE SEQUENCE [LARGE SCALE GENOMIC DNA]</scope>
    <source>
        <strain>L20</strain>
    </source>
</reference>
<sequence length="286" mass="32804">MELIIISGRSGSGKSVALRALEDVGYYCVDNLPLPLIPELAGFLSNSGRSAVVSLDIRNIPENPESIEALLEQLSKLTIQTKIIFLDCERNTLIRRYSDTRRLHPLSNKDLSLESAIDLENTLLEPLYQQANYIIDTTNISSHELAENLRGILRGSTDKALKIVFESFGFKYGLPADADYVFDVRFLPNPHWNPELRPMTGLEQPVIDFLERQTEVHNFIYQTRNYLEMWLPMLEKNNRSYLTIAIGCTGGKHRSVFIAEQLAKYFQSRDKDVQIRHRSLEKHHKK</sequence>
<proteinExistence type="inferred from homology"/>
<comment type="function">
    <text evidence="1">Displays ATPase and GTPase activities.</text>
</comment>
<comment type="similarity">
    <text evidence="1">Belongs to the RapZ-like family.</text>
</comment>
<protein>
    <recommendedName>
        <fullName evidence="1">Nucleotide-binding protein APL_0334</fullName>
    </recommendedName>
</protein>
<evidence type="ECO:0000255" key="1">
    <source>
        <dbReference type="HAMAP-Rule" id="MF_00636"/>
    </source>
</evidence>
<dbReference type="EMBL" id="CP000569">
    <property type="protein sequence ID" value="ABN73438.1"/>
    <property type="molecule type" value="Genomic_DNA"/>
</dbReference>
<dbReference type="SMR" id="A3MZ52"/>
<dbReference type="STRING" id="416269.APL_0334"/>
<dbReference type="EnsemblBacteria" id="ABN73438">
    <property type="protein sequence ID" value="ABN73438"/>
    <property type="gene ID" value="APL_0334"/>
</dbReference>
<dbReference type="KEGG" id="apl:APL_0334"/>
<dbReference type="eggNOG" id="COG1660">
    <property type="taxonomic scope" value="Bacteria"/>
</dbReference>
<dbReference type="HOGENOM" id="CLU_059558_1_1_6"/>
<dbReference type="Proteomes" id="UP000001432">
    <property type="component" value="Chromosome"/>
</dbReference>
<dbReference type="GO" id="GO:0005524">
    <property type="term" value="F:ATP binding"/>
    <property type="evidence" value="ECO:0007669"/>
    <property type="project" value="UniProtKB-UniRule"/>
</dbReference>
<dbReference type="GO" id="GO:0005525">
    <property type="term" value="F:GTP binding"/>
    <property type="evidence" value="ECO:0007669"/>
    <property type="project" value="UniProtKB-UniRule"/>
</dbReference>
<dbReference type="Gene3D" id="3.40.50.300">
    <property type="entry name" value="P-loop containing nucleotide triphosphate hydrolases"/>
    <property type="match status" value="1"/>
</dbReference>
<dbReference type="HAMAP" id="MF_00636">
    <property type="entry name" value="RapZ_like"/>
    <property type="match status" value="1"/>
</dbReference>
<dbReference type="InterPro" id="IPR027417">
    <property type="entry name" value="P-loop_NTPase"/>
</dbReference>
<dbReference type="InterPro" id="IPR005337">
    <property type="entry name" value="RapZ-like"/>
</dbReference>
<dbReference type="InterPro" id="IPR053930">
    <property type="entry name" value="RapZ-like_N"/>
</dbReference>
<dbReference type="InterPro" id="IPR053931">
    <property type="entry name" value="RapZ_C"/>
</dbReference>
<dbReference type="NCBIfam" id="NF003828">
    <property type="entry name" value="PRK05416.1"/>
    <property type="match status" value="1"/>
</dbReference>
<dbReference type="PANTHER" id="PTHR30448">
    <property type="entry name" value="RNASE ADAPTER PROTEIN RAPZ"/>
    <property type="match status" value="1"/>
</dbReference>
<dbReference type="PANTHER" id="PTHR30448:SF0">
    <property type="entry name" value="RNASE ADAPTER PROTEIN RAPZ"/>
    <property type="match status" value="1"/>
</dbReference>
<dbReference type="Pfam" id="PF22740">
    <property type="entry name" value="PapZ_C"/>
    <property type="match status" value="1"/>
</dbReference>
<dbReference type="Pfam" id="PF03668">
    <property type="entry name" value="RapZ-like_N"/>
    <property type="match status" value="1"/>
</dbReference>
<dbReference type="PIRSF" id="PIRSF005052">
    <property type="entry name" value="P-loopkin"/>
    <property type="match status" value="1"/>
</dbReference>
<dbReference type="SUPFAM" id="SSF52540">
    <property type="entry name" value="P-loop containing nucleoside triphosphate hydrolases"/>
    <property type="match status" value="1"/>
</dbReference>
<organism>
    <name type="scientific">Actinobacillus pleuropneumoniae serotype 5b (strain L20)</name>
    <dbReference type="NCBI Taxonomy" id="416269"/>
    <lineage>
        <taxon>Bacteria</taxon>
        <taxon>Pseudomonadati</taxon>
        <taxon>Pseudomonadota</taxon>
        <taxon>Gammaproteobacteria</taxon>
        <taxon>Pasteurellales</taxon>
        <taxon>Pasteurellaceae</taxon>
        <taxon>Actinobacillus</taxon>
    </lineage>
</organism>
<accession>A3MZ52</accession>
<feature type="chain" id="PRO_1000056801" description="Nucleotide-binding protein APL_0334">
    <location>
        <begin position="1"/>
        <end position="286"/>
    </location>
</feature>
<feature type="binding site" evidence="1">
    <location>
        <begin position="8"/>
        <end position="15"/>
    </location>
    <ligand>
        <name>ATP</name>
        <dbReference type="ChEBI" id="CHEBI:30616"/>
    </ligand>
</feature>
<feature type="binding site" evidence="1">
    <location>
        <begin position="56"/>
        <end position="59"/>
    </location>
    <ligand>
        <name>GTP</name>
        <dbReference type="ChEBI" id="CHEBI:37565"/>
    </ligand>
</feature>
<name>Y334_ACTP2</name>
<gene>
    <name type="ordered locus">APL_0334</name>
</gene>
<keyword id="KW-0067">ATP-binding</keyword>
<keyword id="KW-0342">GTP-binding</keyword>
<keyword id="KW-0547">Nucleotide-binding</keyword>
<keyword id="KW-1185">Reference proteome</keyword>